<accession>A7ZBN0</accession>
<protein>
    <recommendedName>
        <fullName evidence="1">Na(+)/H(+) antiporter NhaA</fullName>
    </recommendedName>
    <alternativeName>
        <fullName evidence="1">Sodium/proton antiporter NhaA</fullName>
    </alternativeName>
</protein>
<proteinExistence type="inferred from homology"/>
<evidence type="ECO:0000255" key="1">
    <source>
        <dbReference type="HAMAP-Rule" id="MF_01844"/>
    </source>
</evidence>
<organism>
    <name type="scientific">Campylobacter concisus (strain 13826)</name>
    <dbReference type="NCBI Taxonomy" id="360104"/>
    <lineage>
        <taxon>Bacteria</taxon>
        <taxon>Pseudomonadati</taxon>
        <taxon>Campylobacterota</taxon>
        <taxon>Epsilonproteobacteria</taxon>
        <taxon>Campylobacterales</taxon>
        <taxon>Campylobacteraceae</taxon>
        <taxon>Campylobacter</taxon>
    </lineage>
</organism>
<name>NHAA_CAMC1</name>
<keyword id="KW-0050">Antiport</keyword>
<keyword id="KW-0997">Cell inner membrane</keyword>
<keyword id="KW-1003">Cell membrane</keyword>
<keyword id="KW-0406">Ion transport</keyword>
<keyword id="KW-0472">Membrane</keyword>
<keyword id="KW-0915">Sodium</keyword>
<keyword id="KW-0739">Sodium transport</keyword>
<keyword id="KW-0812">Transmembrane</keyword>
<keyword id="KW-1133">Transmembrane helix</keyword>
<keyword id="KW-0813">Transport</keyword>
<comment type="function">
    <text evidence="1">Na(+)/H(+) antiporter that extrudes sodium in exchange for external protons.</text>
</comment>
<comment type="catalytic activity">
    <reaction evidence="1">
        <text>Na(+)(in) + 2 H(+)(out) = Na(+)(out) + 2 H(+)(in)</text>
        <dbReference type="Rhea" id="RHEA:29251"/>
        <dbReference type="ChEBI" id="CHEBI:15378"/>
        <dbReference type="ChEBI" id="CHEBI:29101"/>
    </reaction>
    <physiologicalReaction direction="left-to-right" evidence="1">
        <dbReference type="Rhea" id="RHEA:29252"/>
    </physiologicalReaction>
</comment>
<comment type="subcellular location">
    <subcellularLocation>
        <location evidence="1">Cell inner membrane</location>
        <topology evidence="1">Multi-pass membrane protein</topology>
    </subcellularLocation>
</comment>
<comment type="similarity">
    <text evidence="1">Belongs to the NhaA Na(+)/H(+) (TC 2.A.33) antiporter family.</text>
</comment>
<gene>
    <name evidence="1" type="primary">nhaA</name>
    <name type="ordered locus">Ccon26_02780</name>
    <name type="ORF">CCC13826_0732</name>
</gene>
<sequence>MGGIKEFLKHEASGGILLMIATVAALLCQNTFLSDFYNEFLKTKFTVSFGEYGLSKPLILWVNDGLMAVFFFLIGLELKREVLEGELKNPSQIALPAIGAAGGLIVPAVIFYLFTKHDSFALGGWAIPTATDIAFALGILSLLGPRVPTSLKIFLMTLAIVDDLCAIVIIALFYTSELSAQMLAVASVCLAALFALNRLGVKSKAAYLIVGAVMWVAVLKSGVHATLAGVVAAFFIPISFKDEPGKSMLKSIEHDLHGWVAFGVLPIFAFVNAGISLRGVGLDEILSPVALGTALGLFVGKQVGVFSFSFLAIKFKLAKLPEGSNFIQLYGIAVLCGVGFTMSLFINSLAYNDTDAFAYADKLAILLGSVVSGAAGFILLKFSAKNQSARIKECKIQIETIVEKCEIKE</sequence>
<dbReference type="EMBL" id="CP000792">
    <property type="protein sequence ID" value="EAT98911.1"/>
    <property type="molecule type" value="Genomic_DNA"/>
</dbReference>
<dbReference type="RefSeq" id="WP_012001198.1">
    <property type="nucleotide sequence ID" value="NC_009802.2"/>
</dbReference>
<dbReference type="SMR" id="A7ZBN0"/>
<dbReference type="STRING" id="360104.CCC13826_0732"/>
<dbReference type="KEGG" id="cco:CCC13826_0732"/>
<dbReference type="eggNOG" id="COG3004">
    <property type="taxonomic scope" value="Bacteria"/>
</dbReference>
<dbReference type="HOGENOM" id="CLU_015803_1_0_7"/>
<dbReference type="OrthoDB" id="9808135at2"/>
<dbReference type="Proteomes" id="UP000001121">
    <property type="component" value="Chromosome"/>
</dbReference>
<dbReference type="GO" id="GO:0005886">
    <property type="term" value="C:plasma membrane"/>
    <property type="evidence" value="ECO:0007669"/>
    <property type="project" value="UniProtKB-SubCell"/>
</dbReference>
<dbReference type="GO" id="GO:0015385">
    <property type="term" value="F:sodium:proton antiporter activity"/>
    <property type="evidence" value="ECO:0007669"/>
    <property type="project" value="TreeGrafter"/>
</dbReference>
<dbReference type="GO" id="GO:0006885">
    <property type="term" value="P:regulation of pH"/>
    <property type="evidence" value="ECO:0007669"/>
    <property type="project" value="InterPro"/>
</dbReference>
<dbReference type="Gene3D" id="1.20.1530.10">
    <property type="entry name" value="Na+/H+ antiporter like domain"/>
    <property type="match status" value="1"/>
</dbReference>
<dbReference type="HAMAP" id="MF_01844">
    <property type="entry name" value="NhaA"/>
    <property type="match status" value="1"/>
</dbReference>
<dbReference type="InterPro" id="IPR023171">
    <property type="entry name" value="Na/H_antiporter_dom_sf"/>
</dbReference>
<dbReference type="InterPro" id="IPR004670">
    <property type="entry name" value="NhaA"/>
</dbReference>
<dbReference type="NCBIfam" id="TIGR00773">
    <property type="entry name" value="NhaA"/>
    <property type="match status" value="1"/>
</dbReference>
<dbReference type="NCBIfam" id="NF007111">
    <property type="entry name" value="PRK09560.1"/>
    <property type="match status" value="1"/>
</dbReference>
<dbReference type="NCBIfam" id="NF007112">
    <property type="entry name" value="PRK09561.1"/>
    <property type="match status" value="1"/>
</dbReference>
<dbReference type="PANTHER" id="PTHR30341:SF0">
    <property type="entry name" value="NA(+)_H(+) ANTIPORTER NHAA"/>
    <property type="match status" value="1"/>
</dbReference>
<dbReference type="PANTHER" id="PTHR30341">
    <property type="entry name" value="SODIUM ION/PROTON ANTIPORTER NHAA-RELATED"/>
    <property type="match status" value="1"/>
</dbReference>
<dbReference type="Pfam" id="PF06965">
    <property type="entry name" value="Na_H_antiport_1"/>
    <property type="match status" value="1"/>
</dbReference>
<feature type="chain" id="PRO_0000334249" description="Na(+)/H(+) antiporter NhaA">
    <location>
        <begin position="1"/>
        <end position="409"/>
    </location>
</feature>
<feature type="transmembrane region" description="Helical" evidence="1">
    <location>
        <begin position="13"/>
        <end position="33"/>
    </location>
</feature>
<feature type="transmembrane region" description="Helical" evidence="1">
    <location>
        <begin position="58"/>
        <end position="78"/>
    </location>
</feature>
<feature type="transmembrane region" description="Helical" evidence="1">
    <location>
        <begin position="93"/>
        <end position="113"/>
    </location>
</feature>
<feature type="transmembrane region" description="Helical" evidence="1">
    <location>
        <begin position="120"/>
        <end position="140"/>
    </location>
</feature>
<feature type="transmembrane region" description="Helical" evidence="1">
    <location>
        <begin position="153"/>
        <end position="173"/>
    </location>
</feature>
<feature type="transmembrane region" description="Helical" evidence="1">
    <location>
        <begin position="176"/>
        <end position="196"/>
    </location>
</feature>
<feature type="transmembrane region" description="Helical" evidence="1">
    <location>
        <begin position="216"/>
        <end position="236"/>
    </location>
</feature>
<feature type="transmembrane region" description="Helical" evidence="1">
    <location>
        <begin position="256"/>
        <end position="276"/>
    </location>
</feature>
<feature type="transmembrane region" description="Helical" evidence="1">
    <location>
        <begin position="279"/>
        <end position="299"/>
    </location>
</feature>
<feature type="transmembrane region" description="Helical" evidence="1">
    <location>
        <begin position="326"/>
        <end position="346"/>
    </location>
</feature>
<feature type="transmembrane region" description="Helical" evidence="1">
    <location>
        <begin position="363"/>
        <end position="383"/>
    </location>
</feature>
<reference key="1">
    <citation type="submission" date="2007-10" db="EMBL/GenBank/DDBJ databases">
        <title>Genome sequence of Campylobacter concisus 13826 isolated from human feces.</title>
        <authorList>
            <person name="Fouts D.E."/>
            <person name="Mongodin E.F."/>
            <person name="Puiu D."/>
            <person name="Sebastian Y."/>
            <person name="Miller W.G."/>
            <person name="Mandrell R.E."/>
            <person name="On S."/>
            <person name="Nelson K.E."/>
        </authorList>
    </citation>
    <scope>NUCLEOTIDE SEQUENCE [LARGE SCALE GENOMIC DNA]</scope>
    <source>
        <strain>13826</strain>
    </source>
</reference>